<dbReference type="EC" id="4.2.2.2"/>
<dbReference type="EMBL" id="DS499600">
    <property type="protein sequence ID" value="EDP48721.1"/>
    <property type="molecule type" value="Genomic_DNA"/>
</dbReference>
<dbReference type="SMR" id="B0Y9M8"/>
<dbReference type="GlyCosmos" id="B0Y9M8">
    <property type="glycosylation" value="1 site, No reported glycans"/>
</dbReference>
<dbReference type="EnsemblFungi" id="EDP48721">
    <property type="protein sequence ID" value="EDP48721"/>
    <property type="gene ID" value="AFUB_081630"/>
</dbReference>
<dbReference type="VEuPathDB" id="FungiDB:AFUB_081630"/>
<dbReference type="HOGENOM" id="CLU_044863_3_1_1"/>
<dbReference type="OrthoDB" id="47320at5052"/>
<dbReference type="PhylomeDB" id="B0Y9M8"/>
<dbReference type="Proteomes" id="UP000001699">
    <property type="component" value="Unassembled WGS sequence"/>
</dbReference>
<dbReference type="GO" id="GO:0005576">
    <property type="term" value="C:extracellular region"/>
    <property type="evidence" value="ECO:0007669"/>
    <property type="project" value="UniProtKB-SubCell"/>
</dbReference>
<dbReference type="GO" id="GO:0030570">
    <property type="term" value="F:pectate lyase activity"/>
    <property type="evidence" value="ECO:0007669"/>
    <property type="project" value="UniProtKB-EC"/>
</dbReference>
<dbReference type="GO" id="GO:0071555">
    <property type="term" value="P:cell wall organization"/>
    <property type="evidence" value="ECO:0007669"/>
    <property type="project" value="UniProtKB-KW"/>
</dbReference>
<dbReference type="GO" id="GO:0045490">
    <property type="term" value="P:pectin catabolic process"/>
    <property type="evidence" value="ECO:0007669"/>
    <property type="project" value="TreeGrafter"/>
</dbReference>
<dbReference type="FunFam" id="2.160.20.10:FF:000044">
    <property type="entry name" value="Pectate lyase E"/>
    <property type="match status" value="1"/>
</dbReference>
<dbReference type="Gene3D" id="2.160.20.10">
    <property type="entry name" value="Single-stranded right-handed beta-helix, Pectin lyase-like"/>
    <property type="match status" value="1"/>
</dbReference>
<dbReference type="InterPro" id="IPR004898">
    <property type="entry name" value="Pectate_lyase_PlyH/PlyE-like"/>
</dbReference>
<dbReference type="InterPro" id="IPR012334">
    <property type="entry name" value="Pectin_lyas_fold"/>
</dbReference>
<dbReference type="InterPro" id="IPR011050">
    <property type="entry name" value="Pectin_lyase_fold/virulence"/>
</dbReference>
<dbReference type="PANTHER" id="PTHR33407:SF8">
    <property type="entry name" value="PECTATE LYASE E"/>
    <property type="match status" value="1"/>
</dbReference>
<dbReference type="PANTHER" id="PTHR33407">
    <property type="entry name" value="PECTATE LYASE F-RELATED"/>
    <property type="match status" value="1"/>
</dbReference>
<dbReference type="Pfam" id="PF03211">
    <property type="entry name" value="Pectate_lyase"/>
    <property type="match status" value="1"/>
</dbReference>
<dbReference type="SUPFAM" id="SSF51126">
    <property type="entry name" value="Pectin lyase-like"/>
    <property type="match status" value="1"/>
</dbReference>
<name>PLYE_ASPFC</name>
<protein>
    <recommendedName>
        <fullName>Probable pectate lyase E</fullName>
        <ecNumber>4.2.2.2</ecNumber>
    </recommendedName>
</protein>
<feature type="signal peptide" evidence="2">
    <location>
        <begin position="1"/>
        <end position="17"/>
    </location>
</feature>
<feature type="chain" id="PRO_0000394581" description="Probable pectate lyase E">
    <location>
        <begin position="18"/>
        <end position="254"/>
    </location>
</feature>
<feature type="region of interest" description="Disordered" evidence="3">
    <location>
        <begin position="228"/>
        <end position="254"/>
    </location>
</feature>
<feature type="glycosylation site" description="N-linked (GlcNAc...) asparagine" evidence="2">
    <location>
        <position position="175"/>
    </location>
</feature>
<sequence>MYQPLLLLPLLLTSAFATPHDPTTHQALEKRASFPIPSSKGSVTYSSPKTISGTFDGGLKTYGRGVKCTGQKEGGEKDAVFVLEDGATLKNAIIGADQIEGVYCKGSCTIQNVWWTDVCEDALSLKGTGSGTHRIIGGGARNADDKVIQHNSGGKVIIQDFTVQNFGKLYRACGNCSKQFKRTVEISGVKASSGKALVGINSNYGDTATISGCASSVKEICVEYEGTDNNKKEPAKKSSGPSNACKYKEPLASC</sequence>
<comment type="function">
    <text evidence="1">Pectinolytic enzyme consist of four classes of enzymes: pectin lyase, polygalacturonase, pectin methylesterase and rhamnogalacturonase. Among pectinolytic enzymes, pectin lyase is the most important in depolymerization of pectin, since it cleaves internal glycosidic bonds of highly methylated pectins. Favors pectate, the anion, over pectin, the methyl ester (By similarity).</text>
</comment>
<comment type="catalytic activity">
    <reaction>
        <text>Eliminative cleavage of (1-&gt;4)-alpha-D-galacturonan to give oligosaccharides with 4-deoxy-alpha-D-galact-4-enuronosyl groups at their non-reducing ends.</text>
        <dbReference type="EC" id="4.2.2.2"/>
    </reaction>
</comment>
<comment type="cofactor">
    <cofactor evidence="1">
        <name>Ca(2+)</name>
        <dbReference type="ChEBI" id="CHEBI:29108"/>
    </cofactor>
    <text evidence="1">Binds 1 Ca(2+) ion per subunit.</text>
</comment>
<comment type="subcellular location">
    <subcellularLocation>
        <location evidence="1">Secreted</location>
    </subcellularLocation>
</comment>
<comment type="similarity">
    <text evidence="4">Belongs to the polysaccharide lyase 3 family.</text>
</comment>
<proteinExistence type="inferred from homology"/>
<evidence type="ECO:0000250" key="1"/>
<evidence type="ECO:0000255" key="2"/>
<evidence type="ECO:0000256" key="3">
    <source>
        <dbReference type="SAM" id="MobiDB-lite"/>
    </source>
</evidence>
<evidence type="ECO:0000305" key="4"/>
<organism>
    <name type="scientific">Aspergillus fumigatus (strain CBS 144.89 / FGSC A1163 / CEA10)</name>
    <name type="common">Neosartorya fumigata</name>
    <dbReference type="NCBI Taxonomy" id="451804"/>
    <lineage>
        <taxon>Eukaryota</taxon>
        <taxon>Fungi</taxon>
        <taxon>Dikarya</taxon>
        <taxon>Ascomycota</taxon>
        <taxon>Pezizomycotina</taxon>
        <taxon>Eurotiomycetes</taxon>
        <taxon>Eurotiomycetidae</taxon>
        <taxon>Eurotiales</taxon>
        <taxon>Aspergillaceae</taxon>
        <taxon>Aspergillus</taxon>
        <taxon>Aspergillus subgen. Fumigati</taxon>
    </lineage>
</organism>
<keyword id="KW-0106">Calcium</keyword>
<keyword id="KW-0119">Carbohydrate metabolism</keyword>
<keyword id="KW-0961">Cell wall biogenesis/degradation</keyword>
<keyword id="KW-0325">Glycoprotein</keyword>
<keyword id="KW-0456">Lyase</keyword>
<keyword id="KW-0624">Polysaccharide degradation</keyword>
<keyword id="KW-0964">Secreted</keyword>
<keyword id="KW-0732">Signal</keyword>
<accession>B0Y9M8</accession>
<gene>
    <name type="primary">plyE</name>
    <name type="ORF">AFUB_081630</name>
</gene>
<reference key="1">
    <citation type="journal article" date="2008" name="PLoS Genet.">
        <title>Genomic islands in the pathogenic filamentous fungus Aspergillus fumigatus.</title>
        <authorList>
            <person name="Fedorova N.D."/>
            <person name="Khaldi N."/>
            <person name="Joardar V.S."/>
            <person name="Maiti R."/>
            <person name="Amedeo P."/>
            <person name="Anderson M.J."/>
            <person name="Crabtree J."/>
            <person name="Silva J.C."/>
            <person name="Badger J.H."/>
            <person name="Albarraq A."/>
            <person name="Angiuoli S."/>
            <person name="Bussey H."/>
            <person name="Bowyer P."/>
            <person name="Cotty P.J."/>
            <person name="Dyer P.S."/>
            <person name="Egan A."/>
            <person name="Galens K."/>
            <person name="Fraser-Liggett C.M."/>
            <person name="Haas B.J."/>
            <person name="Inman J.M."/>
            <person name="Kent R."/>
            <person name="Lemieux S."/>
            <person name="Malavazi I."/>
            <person name="Orvis J."/>
            <person name="Roemer T."/>
            <person name="Ronning C.M."/>
            <person name="Sundaram J.P."/>
            <person name="Sutton G."/>
            <person name="Turner G."/>
            <person name="Venter J.C."/>
            <person name="White O.R."/>
            <person name="Whitty B.R."/>
            <person name="Youngman P."/>
            <person name="Wolfe K.H."/>
            <person name="Goldman G.H."/>
            <person name="Wortman J.R."/>
            <person name="Jiang B."/>
            <person name="Denning D.W."/>
            <person name="Nierman W.C."/>
        </authorList>
    </citation>
    <scope>NUCLEOTIDE SEQUENCE [LARGE SCALE GENOMIC DNA]</scope>
    <source>
        <strain>CBS 144.89 / FGSC A1163 / CEA10</strain>
    </source>
</reference>